<protein>
    <recommendedName>
        <fullName>Transcriptional regulator SKO1</fullName>
    </recommendedName>
</protein>
<accession>Q59VR1</accession>
<accession>A0A1D8PD41</accession>
<keyword id="KW-0238">DNA-binding</keyword>
<keyword id="KW-0539">Nucleus</keyword>
<keyword id="KW-0597">Phosphoprotein</keyword>
<keyword id="KW-1185">Reference proteome</keyword>
<keyword id="KW-0678">Repressor</keyword>
<keyword id="KW-0346">Stress response</keyword>
<keyword id="KW-0804">Transcription</keyword>
<keyword id="KW-0805">Transcription regulation</keyword>
<feature type="chain" id="PRO_0000426091" description="Transcriptional regulator SKO1">
    <location>
        <begin position="1"/>
        <end position="578"/>
    </location>
</feature>
<feature type="domain" description="bZIP" evidence="1">
    <location>
        <begin position="483"/>
        <end position="546"/>
    </location>
</feature>
<feature type="region of interest" description="Disordered" evidence="2">
    <location>
        <begin position="39"/>
        <end position="169"/>
    </location>
</feature>
<feature type="region of interest" description="Disordered" evidence="2">
    <location>
        <begin position="176"/>
        <end position="195"/>
    </location>
</feature>
<feature type="region of interest" description="Disordered" evidence="2">
    <location>
        <begin position="287"/>
        <end position="311"/>
    </location>
</feature>
<feature type="region of interest" description="Disordered" evidence="2">
    <location>
        <begin position="342"/>
        <end position="489"/>
    </location>
</feature>
<feature type="region of interest" description="Basic motif" evidence="1">
    <location>
        <begin position="485"/>
        <end position="505"/>
    </location>
</feature>
<feature type="region of interest" description="Leucine-zipper" evidence="1">
    <location>
        <begin position="508"/>
        <end position="515"/>
    </location>
</feature>
<feature type="compositionally biased region" description="Polar residues" evidence="2">
    <location>
        <begin position="39"/>
        <end position="50"/>
    </location>
</feature>
<feature type="compositionally biased region" description="Low complexity" evidence="2">
    <location>
        <begin position="51"/>
        <end position="62"/>
    </location>
</feature>
<feature type="compositionally biased region" description="Polar residues" evidence="2">
    <location>
        <begin position="70"/>
        <end position="80"/>
    </location>
</feature>
<feature type="compositionally biased region" description="Polar residues" evidence="2">
    <location>
        <begin position="107"/>
        <end position="132"/>
    </location>
</feature>
<feature type="compositionally biased region" description="Low complexity" evidence="2">
    <location>
        <begin position="154"/>
        <end position="169"/>
    </location>
</feature>
<feature type="compositionally biased region" description="Polar residues" evidence="2">
    <location>
        <begin position="184"/>
        <end position="193"/>
    </location>
</feature>
<feature type="compositionally biased region" description="Low complexity" evidence="2">
    <location>
        <begin position="287"/>
        <end position="296"/>
    </location>
</feature>
<feature type="compositionally biased region" description="Low complexity" evidence="2">
    <location>
        <begin position="356"/>
        <end position="370"/>
    </location>
</feature>
<feature type="compositionally biased region" description="Basic residues" evidence="2">
    <location>
        <begin position="384"/>
        <end position="402"/>
    </location>
</feature>
<feature type="compositionally biased region" description="Basic and acidic residues" evidence="2">
    <location>
        <begin position="415"/>
        <end position="443"/>
    </location>
</feature>
<feature type="compositionally biased region" description="Low complexity" evidence="2">
    <location>
        <begin position="445"/>
        <end position="471"/>
    </location>
</feature>
<organism>
    <name type="scientific">Candida albicans (strain SC5314 / ATCC MYA-2876)</name>
    <name type="common">Yeast</name>
    <dbReference type="NCBI Taxonomy" id="237561"/>
    <lineage>
        <taxon>Eukaryota</taxon>
        <taxon>Fungi</taxon>
        <taxon>Dikarya</taxon>
        <taxon>Ascomycota</taxon>
        <taxon>Saccharomycotina</taxon>
        <taxon>Pichiomycetes</taxon>
        <taxon>Debaryomycetaceae</taxon>
        <taxon>Candida/Lodderomyces clade</taxon>
        <taxon>Candida</taxon>
    </lineage>
</organism>
<gene>
    <name type="primary">SKO1</name>
    <name type="ordered locus">CAALFM_C103770WA</name>
    <name type="ORF">CaO19.1032</name>
    <name type="ORF">CaO19.8634</name>
</gene>
<dbReference type="EMBL" id="CP017623">
    <property type="protein sequence ID" value="AOW26054.1"/>
    <property type="molecule type" value="Genomic_DNA"/>
</dbReference>
<dbReference type="RefSeq" id="XP_019330633.1">
    <property type="nucleotide sequence ID" value="XM_019475088.1"/>
</dbReference>
<dbReference type="SMR" id="Q59VR1"/>
<dbReference type="FunCoup" id="Q59VR1">
    <property type="interactions" value="788"/>
</dbReference>
<dbReference type="STRING" id="237561.Q59VR1"/>
<dbReference type="EnsemblFungi" id="C1_03770W_A-T">
    <property type="protein sequence ID" value="C1_03770W_A-T-p1"/>
    <property type="gene ID" value="C1_03770W_A"/>
</dbReference>
<dbReference type="GeneID" id="3644688"/>
<dbReference type="KEGG" id="cal:CAALFM_C103770WA"/>
<dbReference type="CGD" id="CAL0000176357">
    <property type="gene designation" value="SKO1"/>
</dbReference>
<dbReference type="VEuPathDB" id="FungiDB:C1_03770W_A"/>
<dbReference type="eggNOG" id="KOG1414">
    <property type="taxonomic scope" value="Eukaryota"/>
</dbReference>
<dbReference type="HOGENOM" id="CLU_694587_0_0_1"/>
<dbReference type="InParanoid" id="Q59VR1"/>
<dbReference type="OrthoDB" id="295274at2759"/>
<dbReference type="PHI-base" id="PHI:9770"/>
<dbReference type="PRO" id="PR:Q59VR1"/>
<dbReference type="Proteomes" id="UP000000559">
    <property type="component" value="Chromosome 1"/>
</dbReference>
<dbReference type="GO" id="GO:0005634">
    <property type="term" value="C:nucleus"/>
    <property type="evidence" value="ECO:0007669"/>
    <property type="project" value="UniProtKB-SubCell"/>
</dbReference>
<dbReference type="GO" id="GO:0000981">
    <property type="term" value="F:DNA-binding transcription factor activity, RNA polymerase II-specific"/>
    <property type="evidence" value="ECO:0000318"/>
    <property type="project" value="GO_Central"/>
</dbReference>
<dbReference type="GO" id="GO:0000978">
    <property type="term" value="F:RNA polymerase II cis-regulatory region sequence-specific DNA binding"/>
    <property type="evidence" value="ECO:0000318"/>
    <property type="project" value="GO_Central"/>
</dbReference>
<dbReference type="GO" id="GO:0071280">
    <property type="term" value="P:cellular response to copper ion"/>
    <property type="evidence" value="ECO:0000315"/>
    <property type="project" value="CGD"/>
</dbReference>
<dbReference type="GO" id="GO:0030447">
    <property type="term" value="P:filamentous growth"/>
    <property type="evidence" value="ECO:0000315"/>
    <property type="project" value="CGD"/>
</dbReference>
<dbReference type="GO" id="GO:0044182">
    <property type="term" value="P:filamentous growth of a population of unicellular organisms"/>
    <property type="evidence" value="ECO:0000315"/>
    <property type="project" value="CGD"/>
</dbReference>
<dbReference type="GO" id="GO:1900429">
    <property type="term" value="P:negative regulation of filamentous growth of a population of unicellular organisms"/>
    <property type="evidence" value="ECO:0000315"/>
    <property type="project" value="CGD"/>
</dbReference>
<dbReference type="GO" id="GO:0000122">
    <property type="term" value="P:negative regulation of transcription by RNA polymerase II"/>
    <property type="evidence" value="ECO:0000315"/>
    <property type="project" value="CGD"/>
</dbReference>
<dbReference type="GO" id="GO:0006357">
    <property type="term" value="P:regulation of transcription by RNA polymerase II"/>
    <property type="evidence" value="ECO:0000315"/>
    <property type="project" value="CGD"/>
</dbReference>
<dbReference type="GO" id="GO:0051403">
    <property type="term" value="P:stress-activated MAPK cascade"/>
    <property type="evidence" value="ECO:0000315"/>
    <property type="project" value="CGD"/>
</dbReference>
<dbReference type="CDD" id="cd14687">
    <property type="entry name" value="bZIP_ATF2"/>
    <property type="match status" value="1"/>
</dbReference>
<dbReference type="FunFam" id="1.20.5.170:FF:000053">
    <property type="entry name" value="BZIP transcription factor AtfA"/>
    <property type="match status" value="1"/>
</dbReference>
<dbReference type="Gene3D" id="1.20.5.170">
    <property type="match status" value="1"/>
</dbReference>
<dbReference type="InterPro" id="IPR004827">
    <property type="entry name" value="bZIP"/>
</dbReference>
<dbReference type="InterPro" id="IPR046347">
    <property type="entry name" value="bZIP_sf"/>
</dbReference>
<dbReference type="InterPro" id="IPR051027">
    <property type="entry name" value="bZIP_transcription_factors"/>
</dbReference>
<dbReference type="PANTHER" id="PTHR19304">
    <property type="entry name" value="CYCLIC-AMP RESPONSE ELEMENT BINDING PROTEIN"/>
    <property type="match status" value="1"/>
</dbReference>
<dbReference type="SMART" id="SM00338">
    <property type="entry name" value="BRLZ"/>
    <property type="match status" value="1"/>
</dbReference>
<dbReference type="SUPFAM" id="SSF57959">
    <property type="entry name" value="Leucine zipper domain"/>
    <property type="match status" value="1"/>
</dbReference>
<dbReference type="PROSITE" id="PS50217">
    <property type="entry name" value="BZIP"/>
    <property type="match status" value="1"/>
</dbReference>
<evidence type="ECO:0000255" key="1">
    <source>
        <dbReference type="PROSITE-ProRule" id="PRU00978"/>
    </source>
</evidence>
<evidence type="ECO:0000256" key="2">
    <source>
        <dbReference type="SAM" id="MobiDB-lite"/>
    </source>
</evidence>
<evidence type="ECO:0000269" key="3">
    <source>
    </source>
</evidence>
<evidence type="ECO:0000269" key="4">
    <source>
    </source>
</evidence>
<evidence type="ECO:0000269" key="5">
    <source>
    </source>
</evidence>
<evidence type="ECO:0000269" key="6">
    <source>
    </source>
</evidence>
<evidence type="ECO:0000305" key="7"/>
<comment type="function">
    <text evidence="4 6">Transcription repressor involved in cell wall damage response. Regulates 79 caspofungin-responsive genes, including several cell wall biogenesis genes such as CRH11, MNN2, and SKN1. Also controls the expression of pathogenesis and hyphal related genes and represses the yeast-to-hypha transition. Mediates the response to oxidative stress.</text>
</comment>
<comment type="subcellular location">
    <subcellularLocation>
        <location evidence="1">Nucleus</location>
    </subcellularLocation>
</comment>
<comment type="induction">
    <text evidence="3 4 5">Expression is induced by cell wall damage caused by caspofungin, and by osmotic stress through the HOG1 pathway. Expression is positively regulated by MNL1.</text>
</comment>
<comment type="PTM">
    <text evidence="4">Undergoes HOG1-dependent phosphorylation after osmotic stress.</text>
</comment>
<comment type="disruption phenotype">
    <text evidence="4 6">Leads to caspofungin hypersensitivity and increases filamentation.</text>
</comment>
<comment type="similarity">
    <text evidence="7">Belongs to the bZIP family.</text>
</comment>
<proteinExistence type="evidence at protein level"/>
<name>SKO1_CANAL</name>
<sequence length="578" mass="61987">MSSDHKSKFDLELNPFERSFATKESSSVSLNELAAASNNDAISDVNSVATSGSSINNGSSSNKHNLHIPNISSVNQQQGVNGKLPGITPPLFTPGGRRLPPIGLSPGGTTSRQYSNSTNSGSLQSNTDTLGSNIWGGLPTNQTFQPQPQPQPQPQQQQQPQQQQQTQQPHNFNQFMSGMRKTGLTPNESNIRSGLTPGGLTNFGFGSNLVPGLSTPGALLNGPITPGLSSLLGITQTPSSLLVPTTSSFSQNNQSHLIQPAANTSVGPIPESTALGPHVNIPQANQLQQDQSSQALVGGLPPSQPQPQPQPVIAQQIHTIPENQSIAFDMTQPAVANAHLPESKPDLSETANLQRDLNPTADTTTNTTTATKKRKNDTAGGTNKKAKVAKGKKKEPKSKSKGKNNQEDDQNASNKPEDENVPGKENGNEENHKVEAESKEEHLQNGNETTTTKTNNTGNSSNGTTTTTTTKSKSKKNSNVSEDDKRKNFLERNRVAASKCRQRKKLLIQKMEEELEFYSNGYRELSAEVNELRGAILLLKEKHNIQDEIIDGLLSKPTTVPTNVTSIPSTIPTTLNPT</sequence>
<reference key="1">
    <citation type="journal article" date="2004" name="Proc. Natl. Acad. Sci. U.S.A.">
        <title>The diploid genome sequence of Candida albicans.</title>
        <authorList>
            <person name="Jones T."/>
            <person name="Federspiel N.A."/>
            <person name="Chibana H."/>
            <person name="Dungan J."/>
            <person name="Kalman S."/>
            <person name="Magee B.B."/>
            <person name="Newport G."/>
            <person name="Thorstenson Y.R."/>
            <person name="Agabian N."/>
            <person name="Magee P.T."/>
            <person name="Davis R.W."/>
            <person name="Scherer S."/>
        </authorList>
    </citation>
    <scope>NUCLEOTIDE SEQUENCE [LARGE SCALE GENOMIC DNA]</scope>
    <source>
        <strain>SC5314 / ATCC MYA-2876</strain>
    </source>
</reference>
<reference key="2">
    <citation type="journal article" date="2007" name="Genome Biol.">
        <title>Assembly of the Candida albicans genome into sixteen supercontigs aligned on the eight chromosomes.</title>
        <authorList>
            <person name="van het Hoog M."/>
            <person name="Rast T.J."/>
            <person name="Martchenko M."/>
            <person name="Grindle S."/>
            <person name="Dignard D."/>
            <person name="Hogues H."/>
            <person name="Cuomo C."/>
            <person name="Berriman M."/>
            <person name="Scherer S."/>
            <person name="Magee B.B."/>
            <person name="Whiteway M."/>
            <person name="Chibana H."/>
            <person name="Nantel A."/>
            <person name="Magee P.T."/>
        </authorList>
    </citation>
    <scope>GENOME REANNOTATION</scope>
    <source>
        <strain>SC5314 / ATCC MYA-2876</strain>
    </source>
</reference>
<reference key="3">
    <citation type="journal article" date="2013" name="Genome Biol.">
        <title>Assembly of a phased diploid Candida albicans genome facilitates allele-specific measurements and provides a simple model for repeat and indel structure.</title>
        <authorList>
            <person name="Muzzey D."/>
            <person name="Schwartz K."/>
            <person name="Weissman J.S."/>
            <person name="Sherlock G."/>
        </authorList>
    </citation>
    <scope>NUCLEOTIDE SEQUENCE [LARGE SCALE GENOMIC DNA]</scope>
    <scope>GENOME REANNOTATION</scope>
    <source>
        <strain>SC5314 / ATCC MYA-2876</strain>
    </source>
</reference>
<reference key="4">
    <citation type="journal article" date="2006" name="Mol. Biol. Cell">
        <title>Role of the Hog1 stress-activated protein kinase in the global transcriptional response to stress in the fungal pathogen Candida albicans.</title>
        <authorList>
            <person name="Enjalbert B."/>
            <person name="Smith D.A."/>
            <person name="Cornell M.J."/>
            <person name="Alam I."/>
            <person name="Nicholls S."/>
            <person name="Brown A.J.P."/>
            <person name="Quinn J."/>
        </authorList>
    </citation>
    <scope>INDUCTION</scope>
</reference>
<reference key="5">
    <citation type="journal article" date="2008" name="Mol. Biol. Cell">
        <title>Regulation of the Candida albicans cell wall damage response by transcription factor Sko1 and PAS kinase Psk1.</title>
        <authorList>
            <person name="Rauceo J.M."/>
            <person name="Blankenship J.R."/>
            <person name="Fanning S."/>
            <person name="Hamaker J.J."/>
            <person name="Deneault J.S."/>
            <person name="Smith F.J."/>
            <person name="Nantel A."/>
            <person name="Mitchell A.P."/>
        </authorList>
    </citation>
    <scope>FUNCTION</scope>
    <scope>DISRUPTION PHENOTYPE</scope>
    <scope>INDUCTION</scope>
    <scope>PHOSPHORYLATION</scope>
</reference>
<reference key="6">
    <citation type="journal article" date="2008" name="Mol. Biol. Cell">
        <title>MNL1 regulates weak acid-induced stress responses of the fungal pathogen Candida albicans.</title>
        <authorList>
            <person name="Ramsdale M."/>
            <person name="Selway L."/>
            <person name="Stead D."/>
            <person name="Walker J."/>
            <person name="Yin Z."/>
            <person name="Nicholls S.M."/>
            <person name="Crowe J."/>
            <person name="Sheils E.M."/>
            <person name="Brown A.J."/>
        </authorList>
    </citation>
    <scope>INDUCTION</scope>
</reference>
<reference key="7">
    <citation type="journal article" date="2010" name="Fungal Genet. Biol.">
        <title>The Sko1 protein represses the yeast-to-hypha transition and regulates the oxidative stress response in Candida albicans.</title>
        <authorList>
            <person name="Alonso-Monge R."/>
            <person name="Roman E."/>
            <person name="Arana D.M."/>
            <person name="Prieto D."/>
            <person name="Urrialde V."/>
            <person name="Nombela C."/>
            <person name="Pla J."/>
        </authorList>
    </citation>
    <scope>FUNCTION</scope>
    <scope>DISRUPTION PHENOTYPE</scope>
</reference>